<proteinExistence type="evidence at transcript level"/>
<evidence type="ECO:0000250" key="1"/>
<evidence type="ECO:0000255" key="2"/>
<evidence type="ECO:0000305" key="3"/>
<keyword id="KW-0067">ATP-binding</keyword>
<keyword id="KW-0238">DNA-binding</keyword>
<keyword id="KW-0547">Nucleotide-binding</keyword>
<keyword id="KW-0539">Nucleus</keyword>
<keyword id="KW-1185">Reference proteome</keyword>
<dbReference type="EMBL" id="U22441">
    <property type="protein sequence ID" value="AAC23700.1"/>
    <property type="molecule type" value="mRNA"/>
</dbReference>
<dbReference type="PIR" id="T06365">
    <property type="entry name" value="T06365"/>
</dbReference>
<dbReference type="RefSeq" id="NP_001233788.1">
    <property type="nucleotide sequence ID" value="NM_001246859.3"/>
</dbReference>
<dbReference type="SMR" id="Q40134"/>
<dbReference type="FunCoup" id="Q40134">
    <property type="interactions" value="2549"/>
</dbReference>
<dbReference type="STRING" id="4081.Q40134"/>
<dbReference type="PaxDb" id="4081-Solyc07g017540.2.1"/>
<dbReference type="GeneID" id="544003"/>
<dbReference type="KEGG" id="sly:544003"/>
<dbReference type="eggNOG" id="KOG1433">
    <property type="taxonomic scope" value="Eukaryota"/>
</dbReference>
<dbReference type="HOGENOM" id="CLU_041732_0_2_1"/>
<dbReference type="InParanoid" id="Q40134"/>
<dbReference type="OrthoDB" id="10251254at2759"/>
<dbReference type="PhylomeDB" id="Q40134"/>
<dbReference type="Proteomes" id="UP000004994">
    <property type="component" value="Unplaced"/>
</dbReference>
<dbReference type="GO" id="GO:0000794">
    <property type="term" value="C:condensed nuclear chromosome"/>
    <property type="evidence" value="ECO:0000318"/>
    <property type="project" value="GO_Central"/>
</dbReference>
<dbReference type="GO" id="GO:0005524">
    <property type="term" value="F:ATP binding"/>
    <property type="evidence" value="ECO:0007669"/>
    <property type="project" value="UniProtKB-KW"/>
</dbReference>
<dbReference type="GO" id="GO:0016887">
    <property type="term" value="F:ATP hydrolysis activity"/>
    <property type="evidence" value="ECO:0007669"/>
    <property type="project" value="InterPro"/>
</dbReference>
<dbReference type="GO" id="GO:0008094">
    <property type="term" value="F:ATP-dependent activity, acting on DNA"/>
    <property type="evidence" value="ECO:0000318"/>
    <property type="project" value="GO_Central"/>
</dbReference>
<dbReference type="GO" id="GO:0140664">
    <property type="term" value="F:ATP-dependent DNA damage sensor activity"/>
    <property type="evidence" value="ECO:0007669"/>
    <property type="project" value="InterPro"/>
</dbReference>
<dbReference type="GO" id="GO:0000150">
    <property type="term" value="F:DNA strand exchange activity"/>
    <property type="evidence" value="ECO:0000318"/>
    <property type="project" value="GO_Central"/>
</dbReference>
<dbReference type="GO" id="GO:0003690">
    <property type="term" value="F:double-stranded DNA binding"/>
    <property type="evidence" value="ECO:0000318"/>
    <property type="project" value="GO_Central"/>
</dbReference>
<dbReference type="GO" id="GO:0003697">
    <property type="term" value="F:single-stranded DNA binding"/>
    <property type="evidence" value="ECO:0000318"/>
    <property type="project" value="GO_Central"/>
</dbReference>
<dbReference type="GO" id="GO:0070192">
    <property type="term" value="P:chromosome organization involved in meiotic cell cycle"/>
    <property type="evidence" value="ECO:0000318"/>
    <property type="project" value="GO_Central"/>
</dbReference>
<dbReference type="GO" id="GO:0000730">
    <property type="term" value="P:DNA recombinase assembly"/>
    <property type="evidence" value="ECO:0000318"/>
    <property type="project" value="GO_Central"/>
</dbReference>
<dbReference type="GO" id="GO:0042148">
    <property type="term" value="P:DNA strand invasion"/>
    <property type="evidence" value="ECO:0000318"/>
    <property type="project" value="GO_Central"/>
</dbReference>
<dbReference type="GO" id="GO:0006312">
    <property type="term" value="P:mitotic recombination"/>
    <property type="evidence" value="ECO:0000318"/>
    <property type="project" value="GO_Central"/>
</dbReference>
<dbReference type="GO" id="GO:1990426">
    <property type="term" value="P:mitotic recombination-dependent replication fork processing"/>
    <property type="evidence" value="ECO:0007669"/>
    <property type="project" value="InterPro"/>
</dbReference>
<dbReference type="GO" id="GO:0007131">
    <property type="term" value="P:reciprocal meiotic recombination"/>
    <property type="evidence" value="ECO:0000318"/>
    <property type="project" value="GO_Central"/>
</dbReference>
<dbReference type="CDD" id="cd19513">
    <property type="entry name" value="Rad51"/>
    <property type="match status" value="1"/>
</dbReference>
<dbReference type="FunFam" id="1.10.150.20:FF:000008">
    <property type="entry name" value="DNA repair protein RAD51 homolog"/>
    <property type="match status" value="1"/>
</dbReference>
<dbReference type="FunFam" id="3.40.50.300:FF:000092">
    <property type="entry name" value="DNA repair protein Rad51 homolog"/>
    <property type="match status" value="1"/>
</dbReference>
<dbReference type="Gene3D" id="1.10.150.20">
    <property type="entry name" value="5' to 3' exonuclease, C-terminal subdomain"/>
    <property type="match status" value="1"/>
</dbReference>
<dbReference type="Gene3D" id="3.40.50.300">
    <property type="entry name" value="P-loop containing nucleotide triphosphate hydrolases"/>
    <property type="match status" value="1"/>
</dbReference>
<dbReference type="InterPro" id="IPR003593">
    <property type="entry name" value="AAA+_ATPase"/>
</dbReference>
<dbReference type="InterPro" id="IPR011941">
    <property type="entry name" value="DNA_recomb/repair_Rad51"/>
</dbReference>
<dbReference type="InterPro" id="IPR013632">
    <property type="entry name" value="DNA_recomb/repair_Rad51_C"/>
</dbReference>
<dbReference type="InterPro" id="IPR016467">
    <property type="entry name" value="DNA_recomb/repair_RecA-like"/>
</dbReference>
<dbReference type="InterPro" id="IPR010995">
    <property type="entry name" value="DNA_repair_Rad51/TF_NusA_a-hlx"/>
</dbReference>
<dbReference type="InterPro" id="IPR027417">
    <property type="entry name" value="P-loop_NTPase"/>
</dbReference>
<dbReference type="InterPro" id="IPR020588">
    <property type="entry name" value="RecA_ATP-bd"/>
</dbReference>
<dbReference type="InterPro" id="IPR020587">
    <property type="entry name" value="RecA_monomer-monomer_interface"/>
</dbReference>
<dbReference type="NCBIfam" id="NF003301">
    <property type="entry name" value="PRK04301.1"/>
    <property type="match status" value="1"/>
</dbReference>
<dbReference type="NCBIfam" id="TIGR02239">
    <property type="entry name" value="recomb_RAD51"/>
    <property type="match status" value="1"/>
</dbReference>
<dbReference type="PANTHER" id="PTHR22942:SF39">
    <property type="entry name" value="DNA REPAIR PROTEIN RAD51 HOMOLOG 1"/>
    <property type="match status" value="1"/>
</dbReference>
<dbReference type="PANTHER" id="PTHR22942">
    <property type="entry name" value="RECA/RAD51/RADA DNA STRAND-PAIRING FAMILY MEMBER"/>
    <property type="match status" value="1"/>
</dbReference>
<dbReference type="Pfam" id="PF14520">
    <property type="entry name" value="HHH_5"/>
    <property type="match status" value="1"/>
</dbReference>
<dbReference type="Pfam" id="PF08423">
    <property type="entry name" value="Rad51"/>
    <property type="match status" value="1"/>
</dbReference>
<dbReference type="PIRSF" id="PIRSF005856">
    <property type="entry name" value="Rad51"/>
    <property type="match status" value="1"/>
</dbReference>
<dbReference type="SMART" id="SM00382">
    <property type="entry name" value="AAA"/>
    <property type="match status" value="1"/>
</dbReference>
<dbReference type="SUPFAM" id="SSF52540">
    <property type="entry name" value="P-loop containing nucleoside triphosphate hydrolases"/>
    <property type="match status" value="1"/>
</dbReference>
<dbReference type="SUPFAM" id="SSF47794">
    <property type="entry name" value="Rad51 N-terminal domain-like"/>
    <property type="match status" value="1"/>
</dbReference>
<dbReference type="PROSITE" id="PS50162">
    <property type="entry name" value="RECA_2"/>
    <property type="match status" value="1"/>
</dbReference>
<dbReference type="PROSITE" id="PS50163">
    <property type="entry name" value="RECA_3"/>
    <property type="match status" value="1"/>
</dbReference>
<accession>Q40134</accession>
<comment type="function">
    <text evidence="1">Binds to single and double-stranded DNA and exhibits DNA-dependent ATPase activity. Underwinds duplex DNA (By similarity).</text>
</comment>
<comment type="subcellular location">
    <subcellularLocation>
        <location evidence="3">Nucleus</location>
    </subcellularLocation>
</comment>
<comment type="similarity">
    <text evidence="3">Belongs to the RecA family. RAD51 subfamily.</text>
</comment>
<organism>
    <name type="scientific">Solanum lycopersicum</name>
    <name type="common">Tomato</name>
    <name type="synonym">Lycopersicon esculentum</name>
    <dbReference type="NCBI Taxonomy" id="4081"/>
    <lineage>
        <taxon>Eukaryota</taxon>
        <taxon>Viridiplantae</taxon>
        <taxon>Streptophyta</taxon>
        <taxon>Embryophyta</taxon>
        <taxon>Tracheophyta</taxon>
        <taxon>Spermatophyta</taxon>
        <taxon>Magnoliopsida</taxon>
        <taxon>eudicotyledons</taxon>
        <taxon>Gunneridae</taxon>
        <taxon>Pentapetalae</taxon>
        <taxon>asterids</taxon>
        <taxon>lamiids</taxon>
        <taxon>Solanales</taxon>
        <taxon>Solanaceae</taxon>
        <taxon>Solanoideae</taxon>
        <taxon>Solaneae</taxon>
        <taxon>Solanum</taxon>
        <taxon>Solanum subgen. Lycopersicon</taxon>
    </lineage>
</organism>
<gene>
    <name type="primary">RAD51</name>
</gene>
<sequence>MEQQHRNQKSMQDQNDEIEDVQHGPFPVEQLQASGIAALDVKKLKDAGLCTVESVVYAPRKELLQIKGISEAKVDKIIEAASKLVPLGFTSASQLHAQRLEIIQITSGSKELDKILEGGIETGSITEIYGEFRCGKTQLCHTLCVTCQLPLDQGGGEGKAMYIDAEGTFRPQRLLQIADRYGLNGPDVLENVAYARAYNTDHQSRLLLEAASMMVETRFALMIVDSATALYRTDFSGRGELSARQMHLAKFLRSLQKLADEFGVAVVITNQVVAQVDGSAVFAGPQIKPIGGNIMAHASTTRLALRKGRAEERICKVVSSPCLAEAEARFQISVEGVTDVKD</sequence>
<feature type="chain" id="PRO_0000122927" description="DNA repair protein RAD51 homolog">
    <location>
        <begin position="1"/>
        <end position="342"/>
    </location>
</feature>
<feature type="domain" description="HhH">
    <location>
        <begin position="51"/>
        <end position="80"/>
    </location>
</feature>
<feature type="binding site" evidence="2">
    <location>
        <begin position="130"/>
        <end position="137"/>
    </location>
    <ligand>
        <name>ATP</name>
        <dbReference type="ChEBI" id="CHEBI:30616"/>
    </ligand>
</feature>
<protein>
    <recommendedName>
        <fullName>DNA repair protein RAD51 homolog</fullName>
    </recommendedName>
</protein>
<name>RAD51_SOLLC</name>
<reference key="1">
    <citation type="journal article" date="1997" name="Curr. Genet.">
        <title>Isolation and characterization of rad51 orthologs from Coprinus cinereus and Lycopersicon esculentum, and phylogenetic analysis of eukaryotic recA homologs.</title>
        <authorList>
            <person name="Stassen N.Y."/>
            <person name="Logsdon J.M. Jr."/>
            <person name="Vora G.J."/>
            <person name="Offenberg H.H."/>
            <person name="Palmer J.D."/>
            <person name="Zolan M.E."/>
        </authorList>
    </citation>
    <scope>NUCLEOTIDE SEQUENCE [MRNA]</scope>
    <source>
        <tissue>Anther</tissue>
    </source>
</reference>